<dbReference type="EMBL" id="AL766856">
    <property type="protein sequence ID" value="CAD47709.1"/>
    <property type="molecule type" value="Genomic_DNA"/>
</dbReference>
<dbReference type="RefSeq" id="WP_000272487.1">
    <property type="nucleotide sequence ID" value="NC_004368.1"/>
</dbReference>
<dbReference type="SMR" id="Q8E2R7"/>
<dbReference type="KEGG" id="san:ruvA"/>
<dbReference type="eggNOG" id="COG0632">
    <property type="taxonomic scope" value="Bacteria"/>
</dbReference>
<dbReference type="HOGENOM" id="CLU_087936_1_0_9"/>
<dbReference type="Proteomes" id="UP000000823">
    <property type="component" value="Chromosome"/>
</dbReference>
<dbReference type="GO" id="GO:0005737">
    <property type="term" value="C:cytoplasm"/>
    <property type="evidence" value="ECO:0007669"/>
    <property type="project" value="UniProtKB-SubCell"/>
</dbReference>
<dbReference type="GO" id="GO:0009379">
    <property type="term" value="C:Holliday junction helicase complex"/>
    <property type="evidence" value="ECO:0007669"/>
    <property type="project" value="InterPro"/>
</dbReference>
<dbReference type="GO" id="GO:0048476">
    <property type="term" value="C:Holliday junction resolvase complex"/>
    <property type="evidence" value="ECO:0007669"/>
    <property type="project" value="UniProtKB-UniRule"/>
</dbReference>
<dbReference type="GO" id="GO:0005524">
    <property type="term" value="F:ATP binding"/>
    <property type="evidence" value="ECO:0007669"/>
    <property type="project" value="InterPro"/>
</dbReference>
<dbReference type="GO" id="GO:0000400">
    <property type="term" value="F:four-way junction DNA binding"/>
    <property type="evidence" value="ECO:0007669"/>
    <property type="project" value="UniProtKB-UniRule"/>
</dbReference>
<dbReference type="GO" id="GO:0009378">
    <property type="term" value="F:four-way junction helicase activity"/>
    <property type="evidence" value="ECO:0007669"/>
    <property type="project" value="InterPro"/>
</dbReference>
<dbReference type="GO" id="GO:0006310">
    <property type="term" value="P:DNA recombination"/>
    <property type="evidence" value="ECO:0007669"/>
    <property type="project" value="UniProtKB-UniRule"/>
</dbReference>
<dbReference type="GO" id="GO:0006281">
    <property type="term" value="P:DNA repair"/>
    <property type="evidence" value="ECO:0007669"/>
    <property type="project" value="UniProtKB-UniRule"/>
</dbReference>
<dbReference type="CDD" id="cd14332">
    <property type="entry name" value="UBA_RuvA_C"/>
    <property type="match status" value="1"/>
</dbReference>
<dbReference type="Gene3D" id="1.10.150.20">
    <property type="entry name" value="5' to 3' exonuclease, C-terminal subdomain"/>
    <property type="match status" value="1"/>
</dbReference>
<dbReference type="Gene3D" id="1.10.8.10">
    <property type="entry name" value="DNA helicase RuvA subunit, C-terminal domain"/>
    <property type="match status" value="1"/>
</dbReference>
<dbReference type="Gene3D" id="2.40.50.140">
    <property type="entry name" value="Nucleic acid-binding proteins"/>
    <property type="match status" value="1"/>
</dbReference>
<dbReference type="HAMAP" id="MF_00031">
    <property type="entry name" value="DNA_HJ_migration_RuvA"/>
    <property type="match status" value="1"/>
</dbReference>
<dbReference type="InterPro" id="IPR013849">
    <property type="entry name" value="DNA_helicase_Holl-junc_RuvA_I"/>
</dbReference>
<dbReference type="InterPro" id="IPR003583">
    <property type="entry name" value="Hlx-hairpin-Hlx_DNA-bd_motif"/>
</dbReference>
<dbReference type="InterPro" id="IPR012340">
    <property type="entry name" value="NA-bd_OB-fold"/>
</dbReference>
<dbReference type="InterPro" id="IPR000085">
    <property type="entry name" value="RuvA"/>
</dbReference>
<dbReference type="InterPro" id="IPR010994">
    <property type="entry name" value="RuvA_2-like"/>
</dbReference>
<dbReference type="InterPro" id="IPR011114">
    <property type="entry name" value="RuvA_C"/>
</dbReference>
<dbReference type="InterPro" id="IPR036267">
    <property type="entry name" value="RuvA_C_sf"/>
</dbReference>
<dbReference type="NCBIfam" id="TIGR00084">
    <property type="entry name" value="ruvA"/>
    <property type="match status" value="1"/>
</dbReference>
<dbReference type="Pfam" id="PF14520">
    <property type="entry name" value="HHH_5"/>
    <property type="match status" value="1"/>
</dbReference>
<dbReference type="Pfam" id="PF07499">
    <property type="entry name" value="RuvA_C"/>
    <property type="match status" value="1"/>
</dbReference>
<dbReference type="Pfam" id="PF01330">
    <property type="entry name" value="RuvA_N"/>
    <property type="match status" value="1"/>
</dbReference>
<dbReference type="SMART" id="SM00278">
    <property type="entry name" value="HhH1"/>
    <property type="match status" value="2"/>
</dbReference>
<dbReference type="SUPFAM" id="SSF46929">
    <property type="entry name" value="DNA helicase RuvA subunit, C-terminal domain"/>
    <property type="match status" value="1"/>
</dbReference>
<dbReference type="SUPFAM" id="SSF50249">
    <property type="entry name" value="Nucleic acid-binding proteins"/>
    <property type="match status" value="1"/>
</dbReference>
<dbReference type="SUPFAM" id="SSF47781">
    <property type="entry name" value="RuvA domain 2-like"/>
    <property type="match status" value="1"/>
</dbReference>
<proteinExistence type="inferred from homology"/>
<feature type="chain" id="PRO_0000094686" description="Holliday junction branch migration complex subunit RuvA">
    <location>
        <begin position="1"/>
        <end position="196"/>
    </location>
</feature>
<feature type="region of interest" description="Domain I" evidence="1">
    <location>
        <begin position="1"/>
        <end position="63"/>
    </location>
</feature>
<feature type="region of interest" description="Domain II" evidence="1">
    <location>
        <begin position="64"/>
        <end position="142"/>
    </location>
</feature>
<feature type="region of interest" description="Flexible linker" evidence="1">
    <location>
        <begin position="143"/>
        <end position="148"/>
    </location>
</feature>
<feature type="region of interest" description="Domain III" evidence="1">
    <location>
        <begin position="148"/>
        <end position="196"/>
    </location>
</feature>
<organism>
    <name type="scientific">Streptococcus agalactiae serotype III (strain NEM316)</name>
    <dbReference type="NCBI Taxonomy" id="211110"/>
    <lineage>
        <taxon>Bacteria</taxon>
        <taxon>Bacillati</taxon>
        <taxon>Bacillota</taxon>
        <taxon>Bacilli</taxon>
        <taxon>Lactobacillales</taxon>
        <taxon>Streptococcaceae</taxon>
        <taxon>Streptococcus</taxon>
    </lineage>
</organism>
<sequence length="196" mass="21729">MYDYIKGKLSKITAKFIVVETAGLGYMIYVANPYSFSGYVNQEVTIYLHQVIRDDAHLLFGFHTENEKEIFLNLISVSGIGPTTALAIIAVDDNEGLVSAIDNSDIKYLTKFPKIGKKTAQQMILDLSGKFVEASGESATSRKVSSEQNSNLEEAMEALLALGYKATELKKVKAFFEGTNETVEQYIKSSLKMLMK</sequence>
<gene>
    <name evidence="1" type="primary">ruvA</name>
    <name type="ordered locus">gbs2050</name>
</gene>
<evidence type="ECO:0000255" key="1">
    <source>
        <dbReference type="HAMAP-Rule" id="MF_00031"/>
    </source>
</evidence>
<accession>Q8E2R7</accession>
<reference key="1">
    <citation type="journal article" date="2002" name="Mol. Microbiol.">
        <title>Genome sequence of Streptococcus agalactiae, a pathogen causing invasive neonatal disease.</title>
        <authorList>
            <person name="Glaser P."/>
            <person name="Rusniok C."/>
            <person name="Buchrieser C."/>
            <person name="Chevalier F."/>
            <person name="Frangeul L."/>
            <person name="Msadek T."/>
            <person name="Zouine M."/>
            <person name="Couve E."/>
            <person name="Lalioui L."/>
            <person name="Poyart C."/>
            <person name="Trieu-Cuot P."/>
            <person name="Kunst F."/>
        </authorList>
    </citation>
    <scope>NUCLEOTIDE SEQUENCE [LARGE SCALE GENOMIC DNA]</scope>
    <source>
        <strain>NEM316</strain>
    </source>
</reference>
<keyword id="KW-0963">Cytoplasm</keyword>
<keyword id="KW-0227">DNA damage</keyword>
<keyword id="KW-0233">DNA recombination</keyword>
<keyword id="KW-0234">DNA repair</keyword>
<keyword id="KW-0238">DNA-binding</keyword>
<protein>
    <recommendedName>
        <fullName evidence="1">Holliday junction branch migration complex subunit RuvA</fullName>
    </recommendedName>
</protein>
<comment type="function">
    <text evidence="1">The RuvA-RuvB-RuvC complex processes Holliday junction (HJ) DNA during genetic recombination and DNA repair, while the RuvA-RuvB complex plays an important role in the rescue of blocked DNA replication forks via replication fork reversal (RFR). RuvA specifically binds to HJ cruciform DNA, conferring on it an open structure. The RuvB hexamer acts as an ATP-dependent pump, pulling dsDNA into and through the RuvAB complex. HJ branch migration allows RuvC to scan DNA until it finds its consensus sequence, where it cleaves and resolves the cruciform DNA.</text>
</comment>
<comment type="subunit">
    <text evidence="1">Homotetramer. Forms an RuvA(8)-RuvB(12)-Holliday junction (HJ) complex. HJ DNA is sandwiched between 2 RuvA tetramers; dsDNA enters through RuvA and exits via RuvB. An RuvB hexamer assembles on each DNA strand where it exits the tetramer. Each RuvB hexamer is contacted by two RuvA subunits (via domain III) on 2 adjacent RuvB subunits; this complex drives branch migration. In the full resolvosome a probable DNA-RuvA(4)-RuvB(12)-RuvC(2) complex forms which resolves the HJ.</text>
</comment>
<comment type="subcellular location">
    <subcellularLocation>
        <location evidence="1">Cytoplasm</location>
    </subcellularLocation>
</comment>
<comment type="domain">
    <text evidence="1">Has three domains with a flexible linker between the domains II and III and assumes an 'L' shape. Domain III is highly mobile and contacts RuvB.</text>
</comment>
<comment type="similarity">
    <text evidence="1">Belongs to the RuvA family.</text>
</comment>
<name>RUVA_STRA3</name>